<sequence>MSSRGHSTLPRTLMAPRMISEGDIGGIAQITSSLFLGRGSVASNRHLLQARGITCIVNATIEIPNFNWPQFEYVKVPLADMPHAPIGLYFDTVADKIHSVSRKHGATLVHCAAGVSRSATLCIAYLMKFHNVCLLEAYNWVKARRPVIRPNVGFWRQLIDYERQLFGKSTVKMVQTPYGIVPDVYEKESRHLMPYWGI</sequence>
<organism>
    <name type="scientific">Homo sapiens</name>
    <name type="common">Human</name>
    <dbReference type="NCBI Taxonomy" id="9606"/>
    <lineage>
        <taxon>Eukaryota</taxon>
        <taxon>Metazoa</taxon>
        <taxon>Chordata</taxon>
        <taxon>Craniata</taxon>
        <taxon>Vertebrata</taxon>
        <taxon>Euteleostomi</taxon>
        <taxon>Mammalia</taxon>
        <taxon>Eutheria</taxon>
        <taxon>Euarchontoglires</taxon>
        <taxon>Primates</taxon>
        <taxon>Haplorrhini</taxon>
        <taxon>Catarrhini</taxon>
        <taxon>Hominidae</taxon>
        <taxon>Homo</taxon>
    </lineage>
</organism>
<evidence type="ECO:0000255" key="1">
    <source>
        <dbReference type="PROSITE-ProRule" id="PRU00160"/>
    </source>
</evidence>
<evidence type="ECO:0000255" key="2">
    <source>
        <dbReference type="PROSITE-ProRule" id="PRU10044"/>
    </source>
</evidence>
<evidence type="ECO:0000269" key="3">
    <source>
    </source>
</evidence>
<evidence type="ECO:0000269" key="4">
    <source>
    </source>
</evidence>
<evidence type="ECO:0000305" key="5"/>
<evidence type="ECO:0007829" key="6">
    <source>
        <dbReference type="PDB" id="2WGP"/>
    </source>
</evidence>
<comment type="function">
    <text evidence="4">Involved in the inactivation of MAP kinases. Dephosphorylates ERK, JNK and p38 MAP-kinases. Plays a negative role in TCR signaling by dephosphorylating MAP3K7 adapter TAB1 leading to its inactivation (PubMed:24403530).</text>
</comment>
<comment type="catalytic activity">
    <reaction evidence="2">
        <text>O-phospho-L-tyrosyl-[protein] + H2O = L-tyrosyl-[protein] + phosphate</text>
        <dbReference type="Rhea" id="RHEA:10684"/>
        <dbReference type="Rhea" id="RHEA-COMP:10136"/>
        <dbReference type="Rhea" id="RHEA-COMP:20101"/>
        <dbReference type="ChEBI" id="CHEBI:15377"/>
        <dbReference type="ChEBI" id="CHEBI:43474"/>
        <dbReference type="ChEBI" id="CHEBI:46858"/>
        <dbReference type="ChEBI" id="CHEBI:61978"/>
        <dbReference type="EC" id="3.1.3.48"/>
    </reaction>
</comment>
<comment type="catalytic activity">
    <reaction evidence="4">
        <text>O-phospho-L-seryl-[protein] + H2O = L-seryl-[protein] + phosphate</text>
        <dbReference type="Rhea" id="RHEA:20629"/>
        <dbReference type="Rhea" id="RHEA-COMP:9863"/>
        <dbReference type="Rhea" id="RHEA-COMP:11604"/>
        <dbReference type="ChEBI" id="CHEBI:15377"/>
        <dbReference type="ChEBI" id="CHEBI:29999"/>
        <dbReference type="ChEBI" id="CHEBI:43474"/>
        <dbReference type="ChEBI" id="CHEBI:83421"/>
        <dbReference type="EC" id="3.1.3.16"/>
    </reaction>
</comment>
<comment type="catalytic activity">
    <reaction>
        <text>O-phospho-L-threonyl-[protein] + H2O = L-threonyl-[protein] + phosphate</text>
        <dbReference type="Rhea" id="RHEA:47004"/>
        <dbReference type="Rhea" id="RHEA-COMP:11060"/>
        <dbReference type="Rhea" id="RHEA-COMP:11605"/>
        <dbReference type="ChEBI" id="CHEBI:15377"/>
        <dbReference type="ChEBI" id="CHEBI:30013"/>
        <dbReference type="ChEBI" id="CHEBI:43474"/>
        <dbReference type="ChEBI" id="CHEBI:61977"/>
        <dbReference type="EC" id="3.1.3.16"/>
    </reaction>
</comment>
<comment type="subunit">
    <text evidence="3">Interacts with CD28.</text>
</comment>
<comment type="interaction">
    <interactant intactId="EBI-3922653">
        <id>O95147</id>
    </interactant>
    <interactant intactId="EBI-741724">
        <id>Q8NA61</id>
        <label>CBY2</label>
    </interactant>
    <organismsDiffer>false</organismsDiffer>
    <experiments>3</experiments>
</comment>
<comment type="similarity">
    <text evidence="5">Belongs to the protein-tyrosine phosphatase family. Non-receptor class dual specificity subfamily.</text>
</comment>
<keyword id="KW-0002">3D-structure</keyword>
<keyword id="KW-0378">Hydrolase</keyword>
<keyword id="KW-0904">Protein phosphatase</keyword>
<keyword id="KW-1267">Proteomics identification</keyword>
<keyword id="KW-1185">Reference proteome</keyword>
<name>DUS14_HUMAN</name>
<reference key="1">
    <citation type="submission" date="1997-12" db="EMBL/GenBank/DDBJ databases">
        <title>MKP-L, a novel MKP-1 like protein tyrosine phosphatase.</title>
        <authorList>
            <person name="Yuan Y."/>
            <person name="Suphapeetiporn K."/>
            <person name="Sun H."/>
        </authorList>
    </citation>
    <scope>NUCLEOTIDE SEQUENCE [MRNA]</scope>
</reference>
<reference key="2">
    <citation type="journal article" date="2001" name="J. Immunol.">
        <title>Negative-feedback regulation of CD28 costimulation by a novel mitogen-activated protein kinase phosphatase, MKP6.</title>
        <authorList>
            <person name="Marti F."/>
            <person name="Krause A."/>
            <person name="Post N.H."/>
            <person name="Lyddane C."/>
            <person name="Dupont B."/>
            <person name="Sadelain M."/>
            <person name="King P.D."/>
        </authorList>
    </citation>
    <scope>NUCLEOTIDE SEQUENCE [MRNA]</scope>
</reference>
<reference key="3">
    <citation type="journal article" date="2004" name="Genome Res.">
        <title>The status, quality, and expansion of the NIH full-length cDNA project: the Mammalian Gene Collection (MGC).</title>
        <authorList>
            <consortium name="The MGC Project Team"/>
        </authorList>
    </citation>
    <scope>NUCLEOTIDE SEQUENCE [LARGE SCALE MRNA]</scope>
    <source>
        <tissue>Lung</tissue>
    </source>
</reference>
<reference key="4">
    <citation type="journal article" date="2008" name="Proc. Natl. Acad. Sci. U.S.A.">
        <title>A quantitative atlas of mitotic phosphorylation.</title>
        <authorList>
            <person name="Dephoure N."/>
            <person name="Zhou C."/>
            <person name="Villen J."/>
            <person name="Beausoleil S.A."/>
            <person name="Bakalarski C.E."/>
            <person name="Elledge S.J."/>
            <person name="Gygi S.P."/>
        </authorList>
    </citation>
    <scope>IDENTIFICATION BY MASS SPECTROMETRY [LARGE SCALE ANALYSIS]</scope>
    <source>
        <tissue>Cervix carcinoma</tissue>
    </source>
</reference>
<reference key="5">
    <citation type="journal article" date="2014" name="J. Immunol.">
        <title>Dual-specificity phosphatase 14 (DUSP14/MKP6) negatively regulates TCR signaling by inhibiting TAB1 activation.</title>
        <authorList>
            <person name="Yang C.Y."/>
            <person name="Li J.P."/>
            <person name="Chiu L.L."/>
            <person name="Lan J.L."/>
            <person name="Chen D.Y."/>
            <person name="Chuang H.C."/>
            <person name="Huang C.Y."/>
            <person name="Tan T.H."/>
        </authorList>
    </citation>
    <scope>FUNCTION</scope>
    <scope>CATALYTIC ACTIVITY</scope>
</reference>
<reference key="6">
    <citation type="journal article" date="2009" name="Acta Crystallogr. D">
        <title>Overproduction, purification and structure determination of human dual-specificity phosphatase 14.</title>
        <authorList>
            <person name="Lountos G.T."/>
            <person name="Tropea J.E."/>
            <person name="Cherry S."/>
            <person name="Waugh D.S."/>
        </authorList>
    </citation>
    <scope>X-RAY CRYSTALLOGRAPHY (1.88 ANGSTROMS) OF 2-191 IN COMPLEX WITH PHOSPHATE</scope>
    <scope>ACTIVE SITE</scope>
    <scope>IDENTIFICATION BY MASS SPECTROMETRY</scope>
</reference>
<dbReference type="EC" id="3.1.3.16" evidence="4"/>
<dbReference type="EC" id="3.1.3.48"/>
<dbReference type="EMBL" id="AF038844">
    <property type="protein sequence ID" value="AAD02105.1"/>
    <property type="molecule type" value="mRNA"/>
</dbReference>
<dbReference type="EMBL" id="AF120032">
    <property type="protein sequence ID" value="AAF28861.1"/>
    <property type="molecule type" value="mRNA"/>
</dbReference>
<dbReference type="EMBL" id="BC000370">
    <property type="protein sequence ID" value="AAH00370.1"/>
    <property type="molecule type" value="mRNA"/>
</dbReference>
<dbReference type="EMBL" id="BC001894">
    <property type="protein sequence ID" value="AAH01894.1"/>
    <property type="molecule type" value="mRNA"/>
</dbReference>
<dbReference type="EMBL" id="BC004448">
    <property type="protein sequence ID" value="AAH04448.1"/>
    <property type="molecule type" value="mRNA"/>
</dbReference>
<dbReference type="CCDS" id="CCDS11320.1"/>
<dbReference type="RefSeq" id="NP_008957.1">
    <property type="nucleotide sequence ID" value="NM_007026.4"/>
</dbReference>
<dbReference type="RefSeq" id="XP_005257034.1">
    <property type="nucleotide sequence ID" value="XM_005256977.4"/>
</dbReference>
<dbReference type="RefSeq" id="XP_011522536.1">
    <property type="nucleotide sequence ID" value="XM_011524234.2"/>
</dbReference>
<dbReference type="RefSeq" id="XP_047291173.1">
    <property type="nucleotide sequence ID" value="XM_047435217.1"/>
</dbReference>
<dbReference type="RefSeq" id="XP_054170826.1">
    <property type="nucleotide sequence ID" value="XM_054314851.1"/>
</dbReference>
<dbReference type="RefSeq" id="XP_054170827.1">
    <property type="nucleotide sequence ID" value="XM_054314852.1"/>
</dbReference>
<dbReference type="RefSeq" id="XP_054170828.1">
    <property type="nucleotide sequence ID" value="XM_054314853.1"/>
</dbReference>
<dbReference type="RefSeq" id="XP_054170829.1">
    <property type="nucleotide sequence ID" value="XM_054314854.1"/>
</dbReference>
<dbReference type="RefSeq" id="XP_054185204.1">
    <property type="nucleotide sequence ID" value="XM_054329229.1"/>
</dbReference>
<dbReference type="RefSeq" id="XP_054185205.1">
    <property type="nucleotide sequence ID" value="XM_054329230.1"/>
</dbReference>
<dbReference type="RefSeq" id="XP_054185206.1">
    <property type="nucleotide sequence ID" value="XM_054329231.1"/>
</dbReference>
<dbReference type="PDB" id="2WGP">
    <property type="method" value="X-ray"/>
    <property type="resolution" value="1.88 A"/>
    <property type="chains" value="A/B=2-191"/>
</dbReference>
<dbReference type="PDBsum" id="2WGP"/>
<dbReference type="SMR" id="O95147"/>
<dbReference type="BioGRID" id="116255">
    <property type="interactions" value="245"/>
</dbReference>
<dbReference type="FunCoup" id="O95147">
    <property type="interactions" value="335"/>
</dbReference>
<dbReference type="IntAct" id="O95147">
    <property type="interactions" value="129"/>
</dbReference>
<dbReference type="MINT" id="O95147"/>
<dbReference type="STRING" id="9606.ENSP00000477653"/>
<dbReference type="BindingDB" id="O95147"/>
<dbReference type="ChEMBL" id="CHEMBL1764941"/>
<dbReference type="DEPOD" id="DUSP14"/>
<dbReference type="GlyGen" id="O95147">
    <property type="glycosylation" value="1 site, 1 O-linked glycan (1 site)"/>
</dbReference>
<dbReference type="iPTMnet" id="O95147"/>
<dbReference type="PhosphoSitePlus" id="O95147"/>
<dbReference type="BioMuta" id="DUSP14"/>
<dbReference type="jPOST" id="O95147"/>
<dbReference type="MassIVE" id="O95147"/>
<dbReference type="PaxDb" id="9606-ENSP00000477653"/>
<dbReference type="PeptideAtlas" id="O95147"/>
<dbReference type="ProteomicsDB" id="50661"/>
<dbReference type="Pumba" id="O95147"/>
<dbReference type="Antibodypedia" id="73139">
    <property type="antibodies" value="340 antibodies from 33 providers"/>
</dbReference>
<dbReference type="DNASU" id="11072"/>
<dbReference type="Ensembl" id="ENST00000613659.1">
    <property type="protein sequence ID" value="ENSP00000484091.1"/>
    <property type="gene ID" value="ENSG00000276023.5"/>
</dbReference>
<dbReference type="Ensembl" id="ENST00000614294.2">
    <property type="protein sequence ID" value="ENSP00000478406.1"/>
    <property type="gene ID" value="ENSG00000275932.2"/>
</dbReference>
<dbReference type="Ensembl" id="ENST00000614411.1">
    <property type="protein sequence ID" value="ENSP00000477653.1"/>
    <property type="gene ID" value="ENSG00000276023.5"/>
</dbReference>
<dbReference type="Ensembl" id="ENST00000617516.5">
    <property type="protein sequence ID" value="ENSP00000478595.1"/>
    <property type="gene ID" value="ENSG00000276023.5"/>
</dbReference>
<dbReference type="Ensembl" id="ENST00000632468.1">
    <property type="protein sequence ID" value="ENSP00000487886.1"/>
    <property type="gene ID" value="ENSG00000275932.2"/>
</dbReference>
<dbReference type="Ensembl" id="ENST00000633870.1">
    <property type="protein sequence ID" value="ENSP00000488882.1"/>
    <property type="gene ID" value="ENSG00000275932.2"/>
</dbReference>
<dbReference type="GeneID" id="11072"/>
<dbReference type="KEGG" id="hsa:11072"/>
<dbReference type="MANE-Select" id="ENST00000617516.5">
    <property type="protein sequence ID" value="ENSP00000478595.1"/>
    <property type="RefSeq nucleotide sequence ID" value="NM_007026.4"/>
    <property type="RefSeq protein sequence ID" value="NP_008957.1"/>
</dbReference>
<dbReference type="AGR" id="HGNC:17007"/>
<dbReference type="CTD" id="11072"/>
<dbReference type="DisGeNET" id="11072"/>
<dbReference type="GeneCards" id="DUSP14"/>
<dbReference type="HGNC" id="HGNC:17007">
    <property type="gene designation" value="DUSP14"/>
</dbReference>
<dbReference type="HPA" id="ENSG00000276023">
    <property type="expression patterns" value="Tissue enhanced (skin)"/>
</dbReference>
<dbReference type="MIM" id="606618">
    <property type="type" value="gene"/>
</dbReference>
<dbReference type="neXtProt" id="NX_O95147"/>
<dbReference type="OpenTargets" id="ENSG00000276023"/>
<dbReference type="PharmGKB" id="PA27523"/>
<dbReference type="VEuPathDB" id="HostDB:ENSG00000276023"/>
<dbReference type="eggNOG" id="KOG1718">
    <property type="taxonomic scope" value="Eukaryota"/>
</dbReference>
<dbReference type="GeneTree" id="ENSGT00940000160675"/>
<dbReference type="HOGENOM" id="CLU_027074_3_2_1"/>
<dbReference type="InParanoid" id="O95147"/>
<dbReference type="OMA" id="VYICGAH"/>
<dbReference type="OrthoDB" id="285418at2759"/>
<dbReference type="PAN-GO" id="O95147">
    <property type="GO annotations" value="0 GO annotations based on evolutionary models"/>
</dbReference>
<dbReference type="PhylomeDB" id="O95147"/>
<dbReference type="TreeFam" id="TF316009"/>
<dbReference type="PathwayCommons" id="O95147"/>
<dbReference type="SignaLink" id="O95147"/>
<dbReference type="SIGNOR" id="O95147"/>
<dbReference type="BioGRID-ORCS" id="11072">
    <property type="hits" value="21 hits in 1166 CRISPR screens"/>
</dbReference>
<dbReference type="ChiTaRS" id="DUSP14">
    <property type="organism name" value="human"/>
</dbReference>
<dbReference type="EvolutionaryTrace" id="O95147"/>
<dbReference type="GenomeRNAi" id="11072"/>
<dbReference type="Pharos" id="O95147">
    <property type="development level" value="Tbio"/>
</dbReference>
<dbReference type="PRO" id="PR:O95147"/>
<dbReference type="Proteomes" id="UP000005640">
    <property type="component" value="Chromosome 17"/>
</dbReference>
<dbReference type="RNAct" id="O95147">
    <property type="molecule type" value="protein"/>
</dbReference>
<dbReference type="Bgee" id="ENSG00000276023">
    <property type="expression patterns" value="Expressed in olfactory segment of nasal mucosa and 102 other cell types or tissues"/>
</dbReference>
<dbReference type="ExpressionAtlas" id="O95147">
    <property type="expression patterns" value="baseline and differential"/>
</dbReference>
<dbReference type="GO" id="GO:0017017">
    <property type="term" value="F:MAP kinase tyrosine/serine/threonine phosphatase activity"/>
    <property type="evidence" value="ECO:0007669"/>
    <property type="project" value="InterPro"/>
</dbReference>
<dbReference type="GO" id="GO:0004722">
    <property type="term" value="F:protein serine/threonine phosphatase activity"/>
    <property type="evidence" value="ECO:0007669"/>
    <property type="project" value="UniProtKB-EC"/>
</dbReference>
<dbReference type="GO" id="GO:0004725">
    <property type="term" value="F:protein tyrosine phosphatase activity"/>
    <property type="evidence" value="ECO:0007669"/>
    <property type="project" value="UniProtKB-EC"/>
</dbReference>
<dbReference type="GO" id="GO:0003723">
    <property type="term" value="F:RNA binding"/>
    <property type="evidence" value="ECO:0007005"/>
    <property type="project" value="UniProtKB"/>
</dbReference>
<dbReference type="CDD" id="cd14572">
    <property type="entry name" value="DUSP14"/>
    <property type="match status" value="1"/>
</dbReference>
<dbReference type="FunFam" id="3.90.190.10:FF:000049">
    <property type="entry name" value="Dual specificity protein phosphatase 14"/>
    <property type="match status" value="1"/>
</dbReference>
<dbReference type="Gene3D" id="3.90.190.10">
    <property type="entry name" value="Protein tyrosine phosphatase superfamily"/>
    <property type="match status" value="1"/>
</dbReference>
<dbReference type="InterPro" id="IPR020420">
    <property type="entry name" value="Atypical_DUSP_subfamB"/>
</dbReference>
<dbReference type="InterPro" id="IPR000340">
    <property type="entry name" value="Dual-sp_phosphatase_cat-dom"/>
</dbReference>
<dbReference type="InterPro" id="IPR052103">
    <property type="entry name" value="Dual_spec_Phospatases"/>
</dbReference>
<dbReference type="InterPro" id="IPR029021">
    <property type="entry name" value="Prot-tyrosine_phosphatase-like"/>
</dbReference>
<dbReference type="InterPro" id="IPR016130">
    <property type="entry name" value="Tyr_Pase_AS"/>
</dbReference>
<dbReference type="InterPro" id="IPR000387">
    <property type="entry name" value="Tyr_Pase_dom"/>
</dbReference>
<dbReference type="InterPro" id="IPR020422">
    <property type="entry name" value="TYR_PHOSPHATASE_DUAL_dom"/>
</dbReference>
<dbReference type="PANTHER" id="PTHR45961:SF5">
    <property type="entry name" value="DUAL SPECIFICITY PROTEIN PHOSPHATASE 14"/>
    <property type="match status" value="1"/>
</dbReference>
<dbReference type="PANTHER" id="PTHR45961">
    <property type="entry name" value="IP21249P"/>
    <property type="match status" value="1"/>
</dbReference>
<dbReference type="Pfam" id="PF00782">
    <property type="entry name" value="DSPc"/>
    <property type="match status" value="1"/>
</dbReference>
<dbReference type="PRINTS" id="PR01908">
    <property type="entry name" value="ADSPHPHTASE"/>
</dbReference>
<dbReference type="PRINTS" id="PR01910">
    <property type="entry name" value="ADSPHPHTASEB"/>
</dbReference>
<dbReference type="SMART" id="SM00195">
    <property type="entry name" value="DSPc"/>
    <property type="match status" value="1"/>
</dbReference>
<dbReference type="SUPFAM" id="SSF52799">
    <property type="entry name" value="(Phosphotyrosine protein) phosphatases II"/>
    <property type="match status" value="1"/>
</dbReference>
<dbReference type="PROSITE" id="PS00383">
    <property type="entry name" value="TYR_PHOSPHATASE_1"/>
    <property type="match status" value="1"/>
</dbReference>
<dbReference type="PROSITE" id="PS50056">
    <property type="entry name" value="TYR_PHOSPHATASE_2"/>
    <property type="match status" value="1"/>
</dbReference>
<dbReference type="PROSITE" id="PS50054">
    <property type="entry name" value="TYR_PHOSPHATASE_DUAL"/>
    <property type="match status" value="1"/>
</dbReference>
<protein>
    <recommendedName>
        <fullName>Dual specificity protein phosphatase 14</fullName>
        <ecNumber evidence="4">3.1.3.16</ecNumber>
        <ecNumber>3.1.3.48</ecNumber>
    </recommendedName>
    <alternativeName>
        <fullName>MKP-1-like protein tyrosine phosphatase</fullName>
        <shortName>MKP-L</shortName>
    </alternativeName>
    <alternativeName>
        <fullName>Mitogen-activated protein kinase phosphatase 6</fullName>
        <shortName>MAP kinase phosphatase 6</shortName>
        <shortName>MKP-6</shortName>
    </alternativeName>
</protein>
<proteinExistence type="evidence at protein level"/>
<accession>O95147</accession>
<gene>
    <name type="primary">DUSP14</name>
    <name type="synonym">MKP6</name>
</gene>
<feature type="chain" id="PRO_0000094822" description="Dual specificity protein phosphatase 14">
    <location>
        <begin position="1"/>
        <end position="198"/>
    </location>
</feature>
<feature type="domain" description="Tyrosine-protein phosphatase" evidence="1">
    <location>
        <begin position="26"/>
        <end position="167"/>
    </location>
</feature>
<feature type="active site" description="Phosphocysteine intermediate" evidence="1 3">
    <location>
        <position position="111"/>
    </location>
</feature>
<feature type="strand" evidence="6">
    <location>
        <begin position="27"/>
        <end position="31"/>
    </location>
</feature>
<feature type="strand" evidence="6">
    <location>
        <begin position="34"/>
        <end position="37"/>
    </location>
</feature>
<feature type="helix" evidence="6">
    <location>
        <begin position="39"/>
        <end position="42"/>
    </location>
</feature>
<feature type="helix" evidence="6">
    <location>
        <begin position="45"/>
        <end position="50"/>
    </location>
</feature>
<feature type="strand" evidence="6">
    <location>
        <begin position="55"/>
        <end position="58"/>
    </location>
</feature>
<feature type="strand" evidence="6">
    <location>
        <begin position="61"/>
        <end position="63"/>
    </location>
</feature>
<feature type="strand" evidence="6">
    <location>
        <begin position="71"/>
        <end position="75"/>
    </location>
</feature>
<feature type="helix" evidence="6">
    <location>
        <begin position="86"/>
        <end position="89"/>
    </location>
</feature>
<feature type="helix" evidence="6">
    <location>
        <begin position="90"/>
        <end position="102"/>
    </location>
</feature>
<feature type="strand" evidence="6">
    <location>
        <begin position="107"/>
        <end position="110"/>
    </location>
</feature>
<feature type="strand" evidence="6">
    <location>
        <begin position="112"/>
        <end position="116"/>
    </location>
</feature>
<feature type="helix" evidence="6">
    <location>
        <begin position="117"/>
        <end position="130"/>
    </location>
</feature>
<feature type="helix" evidence="6">
    <location>
        <begin position="134"/>
        <end position="144"/>
    </location>
</feature>
<feature type="helix" evidence="6">
    <location>
        <begin position="152"/>
        <end position="166"/>
    </location>
</feature>
<feature type="strand" evidence="6">
    <location>
        <begin position="173"/>
        <end position="176"/>
    </location>
</feature>
<feature type="strand" evidence="6">
    <location>
        <begin position="179"/>
        <end position="182"/>
    </location>
</feature>
<feature type="helix" evidence="6">
    <location>
        <begin position="183"/>
        <end position="189"/>
    </location>
</feature>